<proteinExistence type="evidence at protein level"/>
<name>CHAC2_MOUSE</name>
<comment type="function">
    <text evidence="2 4">Catalyzes the cleavage of glutathione into 5-oxo-L-proline and a Cys-Gly dipeptide (PubMed:27913623). Acts specifically on glutathione, but not on other gamma-glutamyl peptides (By similarity).</text>
</comment>
<comment type="catalytic activity">
    <reaction evidence="4">
        <text>glutathione = L-cysteinylglycine + 5-oxo-L-proline</text>
        <dbReference type="Rhea" id="RHEA:47724"/>
        <dbReference type="ChEBI" id="CHEBI:57925"/>
        <dbReference type="ChEBI" id="CHEBI:58402"/>
        <dbReference type="ChEBI" id="CHEBI:61694"/>
        <dbReference type="EC" id="4.3.2.7"/>
    </reaction>
</comment>
<comment type="biophysicochemical properties">
    <kinetics>
        <KM evidence="4">3 mM for glutathione</KM>
        <text evidence="4">kcat is 7.6 min(-1) for glutathione.</text>
    </kinetics>
</comment>
<comment type="subunit">
    <text evidence="2">Monomer.</text>
</comment>
<comment type="subcellular location">
    <subcellularLocation>
        <location evidence="2">Cytoplasm</location>
        <location evidence="2">Cytosol</location>
    </subcellularLocation>
</comment>
<comment type="alternative products">
    <event type="alternative splicing"/>
    <isoform>
        <id>Q9CQG1-1</id>
        <name>1</name>
        <sequence type="displayed"/>
    </isoform>
    <isoform>
        <id>Q9CQG1-2</id>
        <name>2</name>
        <sequence type="described" ref="VSP_030429"/>
    </isoform>
</comment>
<comment type="similarity">
    <text evidence="6">Belongs to the gamma-glutamylcyclotransferase family. ChaC subfamily.</text>
</comment>
<keyword id="KW-0025">Alternative splicing</keyword>
<keyword id="KW-0963">Cytoplasm</keyword>
<keyword id="KW-0456">Lyase</keyword>
<keyword id="KW-1185">Reference proteome</keyword>
<sequence>MWVFGYGSLIWKVDFPYQDKLVGYITNYSRRFWQGSTDHRGVPGKPGRVVTLVEDPGGSVWGVAYKLPVGKEEEVKTYLDFREKGGYRTTTVIFYPKDSTTKPFSVLLYIGTCDNPNYLGPAPLEDIAEQIFNAAGPSGRNTEYLFELADSVRKLVPEDADEHLFSLEKLVKERLEGK</sequence>
<accession>Q9CQG1</accession>
<accession>Q8R3K5</accession>
<accession>Q9D1T7</accession>
<reference key="1">
    <citation type="journal article" date="2005" name="Science">
        <title>The transcriptional landscape of the mammalian genome.</title>
        <authorList>
            <person name="Carninci P."/>
            <person name="Kasukawa T."/>
            <person name="Katayama S."/>
            <person name="Gough J."/>
            <person name="Frith M.C."/>
            <person name="Maeda N."/>
            <person name="Oyama R."/>
            <person name="Ravasi T."/>
            <person name="Lenhard B."/>
            <person name="Wells C."/>
            <person name="Kodzius R."/>
            <person name="Shimokawa K."/>
            <person name="Bajic V.B."/>
            <person name="Brenner S.E."/>
            <person name="Batalov S."/>
            <person name="Forrest A.R."/>
            <person name="Zavolan M."/>
            <person name="Davis M.J."/>
            <person name="Wilming L.G."/>
            <person name="Aidinis V."/>
            <person name="Allen J.E."/>
            <person name="Ambesi-Impiombato A."/>
            <person name="Apweiler R."/>
            <person name="Aturaliya R.N."/>
            <person name="Bailey T.L."/>
            <person name="Bansal M."/>
            <person name="Baxter L."/>
            <person name="Beisel K.W."/>
            <person name="Bersano T."/>
            <person name="Bono H."/>
            <person name="Chalk A.M."/>
            <person name="Chiu K.P."/>
            <person name="Choudhary V."/>
            <person name="Christoffels A."/>
            <person name="Clutterbuck D.R."/>
            <person name="Crowe M.L."/>
            <person name="Dalla E."/>
            <person name="Dalrymple B.P."/>
            <person name="de Bono B."/>
            <person name="Della Gatta G."/>
            <person name="di Bernardo D."/>
            <person name="Down T."/>
            <person name="Engstrom P."/>
            <person name="Fagiolini M."/>
            <person name="Faulkner G."/>
            <person name="Fletcher C.F."/>
            <person name="Fukushima T."/>
            <person name="Furuno M."/>
            <person name="Futaki S."/>
            <person name="Gariboldi M."/>
            <person name="Georgii-Hemming P."/>
            <person name="Gingeras T.R."/>
            <person name="Gojobori T."/>
            <person name="Green R.E."/>
            <person name="Gustincich S."/>
            <person name="Harbers M."/>
            <person name="Hayashi Y."/>
            <person name="Hensch T.K."/>
            <person name="Hirokawa N."/>
            <person name="Hill D."/>
            <person name="Huminiecki L."/>
            <person name="Iacono M."/>
            <person name="Ikeo K."/>
            <person name="Iwama A."/>
            <person name="Ishikawa T."/>
            <person name="Jakt M."/>
            <person name="Kanapin A."/>
            <person name="Katoh M."/>
            <person name="Kawasawa Y."/>
            <person name="Kelso J."/>
            <person name="Kitamura H."/>
            <person name="Kitano H."/>
            <person name="Kollias G."/>
            <person name="Krishnan S.P."/>
            <person name="Kruger A."/>
            <person name="Kummerfeld S.K."/>
            <person name="Kurochkin I.V."/>
            <person name="Lareau L.F."/>
            <person name="Lazarevic D."/>
            <person name="Lipovich L."/>
            <person name="Liu J."/>
            <person name="Liuni S."/>
            <person name="McWilliam S."/>
            <person name="Madan Babu M."/>
            <person name="Madera M."/>
            <person name="Marchionni L."/>
            <person name="Matsuda H."/>
            <person name="Matsuzawa S."/>
            <person name="Miki H."/>
            <person name="Mignone F."/>
            <person name="Miyake S."/>
            <person name="Morris K."/>
            <person name="Mottagui-Tabar S."/>
            <person name="Mulder N."/>
            <person name="Nakano N."/>
            <person name="Nakauchi H."/>
            <person name="Ng P."/>
            <person name="Nilsson R."/>
            <person name="Nishiguchi S."/>
            <person name="Nishikawa S."/>
            <person name="Nori F."/>
            <person name="Ohara O."/>
            <person name="Okazaki Y."/>
            <person name="Orlando V."/>
            <person name="Pang K.C."/>
            <person name="Pavan W.J."/>
            <person name="Pavesi G."/>
            <person name="Pesole G."/>
            <person name="Petrovsky N."/>
            <person name="Piazza S."/>
            <person name="Reed J."/>
            <person name="Reid J.F."/>
            <person name="Ring B.Z."/>
            <person name="Ringwald M."/>
            <person name="Rost B."/>
            <person name="Ruan Y."/>
            <person name="Salzberg S.L."/>
            <person name="Sandelin A."/>
            <person name="Schneider C."/>
            <person name="Schoenbach C."/>
            <person name="Sekiguchi K."/>
            <person name="Semple C.A."/>
            <person name="Seno S."/>
            <person name="Sessa L."/>
            <person name="Sheng Y."/>
            <person name="Shibata Y."/>
            <person name="Shimada H."/>
            <person name="Shimada K."/>
            <person name="Silva D."/>
            <person name="Sinclair B."/>
            <person name="Sperling S."/>
            <person name="Stupka E."/>
            <person name="Sugiura K."/>
            <person name="Sultana R."/>
            <person name="Takenaka Y."/>
            <person name="Taki K."/>
            <person name="Tammoja K."/>
            <person name="Tan S.L."/>
            <person name="Tang S."/>
            <person name="Taylor M.S."/>
            <person name="Tegner J."/>
            <person name="Teichmann S.A."/>
            <person name="Ueda H.R."/>
            <person name="van Nimwegen E."/>
            <person name="Verardo R."/>
            <person name="Wei C.L."/>
            <person name="Yagi K."/>
            <person name="Yamanishi H."/>
            <person name="Zabarovsky E."/>
            <person name="Zhu S."/>
            <person name="Zimmer A."/>
            <person name="Hide W."/>
            <person name="Bult C."/>
            <person name="Grimmond S.M."/>
            <person name="Teasdale R.D."/>
            <person name="Liu E.T."/>
            <person name="Brusic V."/>
            <person name="Quackenbush J."/>
            <person name="Wahlestedt C."/>
            <person name="Mattick J.S."/>
            <person name="Hume D.A."/>
            <person name="Kai C."/>
            <person name="Sasaki D."/>
            <person name="Tomaru Y."/>
            <person name="Fukuda S."/>
            <person name="Kanamori-Katayama M."/>
            <person name="Suzuki M."/>
            <person name="Aoki J."/>
            <person name="Arakawa T."/>
            <person name="Iida J."/>
            <person name="Imamura K."/>
            <person name="Itoh M."/>
            <person name="Kato T."/>
            <person name="Kawaji H."/>
            <person name="Kawagashira N."/>
            <person name="Kawashima T."/>
            <person name="Kojima M."/>
            <person name="Kondo S."/>
            <person name="Konno H."/>
            <person name="Nakano K."/>
            <person name="Ninomiya N."/>
            <person name="Nishio T."/>
            <person name="Okada M."/>
            <person name="Plessy C."/>
            <person name="Shibata K."/>
            <person name="Shiraki T."/>
            <person name="Suzuki S."/>
            <person name="Tagami M."/>
            <person name="Waki K."/>
            <person name="Watahiki A."/>
            <person name="Okamura-Oho Y."/>
            <person name="Suzuki H."/>
            <person name="Kawai J."/>
            <person name="Hayashizaki Y."/>
        </authorList>
    </citation>
    <scope>NUCLEOTIDE SEQUENCE [LARGE SCALE MRNA] (ISOFORMS 1 AND 2)</scope>
    <source>
        <strain>C57BL/6J</strain>
        <tissue>Epididymis</tissue>
        <tissue>Eye</tissue>
        <tissue>Liver</tissue>
    </source>
</reference>
<reference key="2">
    <citation type="journal article" date="2009" name="PLoS Biol.">
        <title>Lineage-specific biology revealed by a finished genome assembly of the mouse.</title>
        <authorList>
            <person name="Church D.M."/>
            <person name="Goodstadt L."/>
            <person name="Hillier L.W."/>
            <person name="Zody M.C."/>
            <person name="Goldstein S."/>
            <person name="She X."/>
            <person name="Bult C.J."/>
            <person name="Agarwala R."/>
            <person name="Cherry J.L."/>
            <person name="DiCuccio M."/>
            <person name="Hlavina W."/>
            <person name="Kapustin Y."/>
            <person name="Meric P."/>
            <person name="Maglott D."/>
            <person name="Birtle Z."/>
            <person name="Marques A.C."/>
            <person name="Graves T."/>
            <person name="Zhou S."/>
            <person name="Teague B."/>
            <person name="Potamousis K."/>
            <person name="Churas C."/>
            <person name="Place M."/>
            <person name="Herschleb J."/>
            <person name="Runnheim R."/>
            <person name="Forrest D."/>
            <person name="Amos-Landgraf J."/>
            <person name="Schwartz D.C."/>
            <person name="Cheng Z."/>
            <person name="Lindblad-Toh K."/>
            <person name="Eichler E.E."/>
            <person name="Ponting C.P."/>
        </authorList>
    </citation>
    <scope>NUCLEOTIDE SEQUENCE [LARGE SCALE GENOMIC DNA]</scope>
    <source>
        <strain>C57BL/6J</strain>
    </source>
</reference>
<reference key="3">
    <citation type="journal article" date="2004" name="Genome Res.">
        <title>The status, quality, and expansion of the NIH full-length cDNA project: the Mammalian Gene Collection (MGC).</title>
        <authorList>
            <consortium name="The MGC Project Team"/>
        </authorList>
    </citation>
    <scope>NUCLEOTIDE SEQUENCE [LARGE SCALE MRNA] (ISOFORM 1)</scope>
    <source>
        <strain>FVB/N</strain>
        <tissue>Mammary tumor</tissue>
    </source>
</reference>
<reference key="4">
    <citation type="journal article" date="2010" name="Cell">
        <title>A tissue-specific atlas of mouse protein phosphorylation and expression.</title>
        <authorList>
            <person name="Huttlin E.L."/>
            <person name="Jedrychowski M.P."/>
            <person name="Elias J.E."/>
            <person name="Goswami T."/>
            <person name="Rad R."/>
            <person name="Beausoleil S.A."/>
            <person name="Villen J."/>
            <person name="Haas W."/>
            <person name="Sowa M.E."/>
            <person name="Gygi S.P."/>
        </authorList>
    </citation>
    <scope>IDENTIFICATION BY MASS SPECTROMETRY [LARGE SCALE ANALYSIS]</scope>
    <source>
        <tissue>Brain</tissue>
        <tissue>Brown adipose tissue</tissue>
        <tissue>Heart</tissue>
        <tissue>Liver</tissue>
        <tissue>Lung</tissue>
        <tissue>Pancreas</tissue>
        <tissue>Spleen</tissue>
        <tissue>Testis</tissue>
    </source>
</reference>
<reference key="5">
    <citation type="journal article" date="2017" name="J. Biol. Chem.">
        <title>ChaC2, an enzyme for slow turnover of cytosolic glutathione.</title>
        <authorList>
            <person name="Kaur A."/>
            <person name="Gautam R."/>
            <person name="Srivastava R."/>
            <person name="Chandel A."/>
            <person name="Kumar A."/>
            <person name="Karthikeyan S."/>
            <person name="Bachhawat A.K."/>
        </authorList>
    </citation>
    <scope>CATALYTIC ACTIVITY</scope>
    <scope>BIOPHYSICOCHEMICAL PROPERTIES</scope>
    <scope>FUNCTION</scope>
</reference>
<organism>
    <name type="scientific">Mus musculus</name>
    <name type="common">Mouse</name>
    <dbReference type="NCBI Taxonomy" id="10090"/>
    <lineage>
        <taxon>Eukaryota</taxon>
        <taxon>Metazoa</taxon>
        <taxon>Chordata</taxon>
        <taxon>Craniata</taxon>
        <taxon>Vertebrata</taxon>
        <taxon>Euteleostomi</taxon>
        <taxon>Mammalia</taxon>
        <taxon>Eutheria</taxon>
        <taxon>Euarchontoglires</taxon>
        <taxon>Glires</taxon>
        <taxon>Rodentia</taxon>
        <taxon>Myomorpha</taxon>
        <taxon>Muroidea</taxon>
        <taxon>Muridae</taxon>
        <taxon>Murinae</taxon>
        <taxon>Mus</taxon>
        <taxon>Mus</taxon>
    </lineage>
</organism>
<gene>
    <name evidence="2" type="primary">Chac2</name>
</gene>
<protein>
    <recommendedName>
        <fullName evidence="2">Putative glutathione-specific gamma-glutamylcyclotransferase 2</fullName>
        <shortName evidence="2">Gamma-GCG 2</shortName>
        <ecNumber evidence="4">4.3.2.7</ecNumber>
    </recommendedName>
    <alternativeName>
        <fullName evidence="3">Cation transport regulator-like protein 2</fullName>
    </alternativeName>
</protein>
<feature type="chain" id="PRO_0000314913" description="Putative glutathione-specific gamma-glutamylcyclotransferase 2">
    <location>
        <begin position="1"/>
        <end position="178"/>
    </location>
</feature>
<feature type="active site" description="Proton acceptor" evidence="1">
    <location>
        <position position="83"/>
    </location>
</feature>
<feature type="binding site" evidence="1">
    <location>
        <begin position="3"/>
        <end position="8"/>
    </location>
    <ligand>
        <name>substrate</name>
    </ligand>
</feature>
<feature type="splice variant" id="VSP_030429" description="In isoform 2." evidence="5">
    <location>
        <begin position="46"/>
        <end position="57"/>
    </location>
</feature>
<feature type="sequence conflict" description="In Ref. 3; AAH25100." evidence="6" ref="3">
    <original>C</original>
    <variation>Y</variation>
    <location>
        <position position="113"/>
    </location>
</feature>
<dbReference type="EC" id="4.3.2.7" evidence="4"/>
<dbReference type="EMBL" id="AK010914">
    <property type="protein sequence ID" value="BAB27264.1"/>
    <property type="molecule type" value="mRNA"/>
</dbReference>
<dbReference type="EMBL" id="AK021391">
    <property type="protein sequence ID" value="BAB32394.1"/>
    <property type="molecule type" value="mRNA"/>
</dbReference>
<dbReference type="EMBL" id="AK078993">
    <property type="protein sequence ID" value="BAC37498.1"/>
    <property type="molecule type" value="mRNA"/>
</dbReference>
<dbReference type="EMBL" id="AL662891">
    <property type="status" value="NOT_ANNOTATED_CDS"/>
    <property type="molecule type" value="Genomic_DNA"/>
</dbReference>
<dbReference type="EMBL" id="BC025100">
    <property type="protein sequence ID" value="AAH25100.1"/>
    <property type="molecule type" value="mRNA"/>
</dbReference>
<dbReference type="CCDS" id="CCDS24510.1">
    <molecule id="Q9CQG1-1"/>
</dbReference>
<dbReference type="CCDS" id="CCDS70154.1">
    <molecule id="Q9CQG1-2"/>
</dbReference>
<dbReference type="RefSeq" id="NP_001277596.1">
    <molecule id="Q9CQG1-2"/>
    <property type="nucleotide sequence ID" value="NM_001290667.1"/>
</dbReference>
<dbReference type="RefSeq" id="NP_080803.1">
    <molecule id="Q9CQG1-1"/>
    <property type="nucleotide sequence ID" value="NM_026527.3"/>
</dbReference>
<dbReference type="SMR" id="Q9CQG1"/>
<dbReference type="FunCoup" id="Q9CQG1">
    <property type="interactions" value="852"/>
</dbReference>
<dbReference type="STRING" id="10090.ENSMUSP00000098942"/>
<dbReference type="PhosphoSitePlus" id="Q9CQG1"/>
<dbReference type="PaxDb" id="10090-ENSMUSP00000098942"/>
<dbReference type="PeptideAtlas" id="Q9CQG1"/>
<dbReference type="ProteomicsDB" id="281660">
    <molecule id="Q9CQG1-1"/>
</dbReference>
<dbReference type="ProteomicsDB" id="281661">
    <molecule id="Q9CQG1-2"/>
</dbReference>
<dbReference type="Pumba" id="Q9CQG1"/>
<dbReference type="Antibodypedia" id="30211">
    <property type="antibodies" value="108 antibodies from 19 providers"/>
</dbReference>
<dbReference type="DNASU" id="68044"/>
<dbReference type="Ensembl" id="ENSMUST00000020553.5">
    <molecule id="Q9CQG1-2"/>
    <property type="protein sequence ID" value="ENSMUSP00000020553.5"/>
    <property type="gene ID" value="ENSMUSG00000020309.7"/>
</dbReference>
<dbReference type="Ensembl" id="ENSMUST00000101394.5">
    <molecule id="Q9CQG1-1"/>
    <property type="protein sequence ID" value="ENSMUSP00000098942.5"/>
    <property type="gene ID" value="ENSMUSG00000020309.7"/>
</dbReference>
<dbReference type="GeneID" id="68044"/>
<dbReference type="KEGG" id="mmu:68044"/>
<dbReference type="UCSC" id="uc007iih.2">
    <molecule id="Q9CQG1-1"/>
    <property type="organism name" value="mouse"/>
</dbReference>
<dbReference type="UCSC" id="uc007iii.2">
    <molecule id="Q9CQG1-2"/>
    <property type="organism name" value="mouse"/>
</dbReference>
<dbReference type="AGR" id="MGI:1915294"/>
<dbReference type="CTD" id="494143"/>
<dbReference type="MGI" id="MGI:1915294">
    <property type="gene designation" value="Chac2"/>
</dbReference>
<dbReference type="VEuPathDB" id="HostDB:ENSMUSG00000020309"/>
<dbReference type="eggNOG" id="KOG3182">
    <property type="taxonomic scope" value="Eukaryota"/>
</dbReference>
<dbReference type="GeneTree" id="ENSGT00390000003855"/>
<dbReference type="HOGENOM" id="CLU_070703_2_2_1"/>
<dbReference type="InParanoid" id="Q9CQG1"/>
<dbReference type="OMA" id="DHREKDG"/>
<dbReference type="OrthoDB" id="1933483at2759"/>
<dbReference type="PhylomeDB" id="Q9CQG1"/>
<dbReference type="TreeFam" id="TF313048"/>
<dbReference type="BRENDA" id="4.3.2.7">
    <property type="organism ID" value="3474"/>
</dbReference>
<dbReference type="Reactome" id="R-MMU-174403">
    <property type="pathway name" value="Glutathione synthesis and recycling"/>
</dbReference>
<dbReference type="BioGRID-ORCS" id="68044">
    <property type="hits" value="4 hits in 74 CRISPR screens"/>
</dbReference>
<dbReference type="ChiTaRS" id="Chac2">
    <property type="organism name" value="mouse"/>
</dbReference>
<dbReference type="PRO" id="PR:Q9CQG1"/>
<dbReference type="Proteomes" id="UP000000589">
    <property type="component" value="Chromosome 11"/>
</dbReference>
<dbReference type="RNAct" id="Q9CQG1">
    <property type="molecule type" value="protein"/>
</dbReference>
<dbReference type="Bgee" id="ENSMUSG00000020309">
    <property type="expression patterns" value="Expressed in fetal liver hematopoietic progenitor cell and 236 other cell types or tissues"/>
</dbReference>
<dbReference type="GO" id="GO:0005829">
    <property type="term" value="C:cytosol"/>
    <property type="evidence" value="ECO:0007669"/>
    <property type="project" value="UniProtKB-SubCell"/>
</dbReference>
<dbReference type="GO" id="GO:0061928">
    <property type="term" value="F:glutathione specific gamma-glutamylcyclotransferase activity"/>
    <property type="evidence" value="ECO:0007669"/>
    <property type="project" value="UniProtKB-EC"/>
</dbReference>
<dbReference type="GO" id="GO:0006751">
    <property type="term" value="P:glutathione catabolic process"/>
    <property type="evidence" value="ECO:0007669"/>
    <property type="project" value="InterPro"/>
</dbReference>
<dbReference type="CDD" id="cd06661">
    <property type="entry name" value="GGCT_like"/>
    <property type="match status" value="1"/>
</dbReference>
<dbReference type="FunFam" id="3.10.490.10:FF:000003">
    <property type="entry name" value="Gamma-glutamylcyclotransferase"/>
    <property type="match status" value="1"/>
</dbReference>
<dbReference type="Gene3D" id="3.10.490.10">
    <property type="entry name" value="Gamma-glutamyl cyclotransferase-like"/>
    <property type="match status" value="1"/>
</dbReference>
<dbReference type="InterPro" id="IPR006840">
    <property type="entry name" value="ChaC"/>
</dbReference>
<dbReference type="InterPro" id="IPR013024">
    <property type="entry name" value="GGCT-like"/>
</dbReference>
<dbReference type="InterPro" id="IPR036568">
    <property type="entry name" value="GGCT-like_sf"/>
</dbReference>
<dbReference type="PANTHER" id="PTHR12192">
    <property type="entry name" value="CATION TRANSPORT PROTEIN CHAC-RELATED"/>
    <property type="match status" value="1"/>
</dbReference>
<dbReference type="PANTHER" id="PTHR12192:SF2">
    <property type="entry name" value="GLUTATHIONE-SPECIFIC GAMMA-GLUTAMYLCYCLOTRANSFERASE 2"/>
    <property type="match status" value="1"/>
</dbReference>
<dbReference type="Pfam" id="PF04752">
    <property type="entry name" value="ChaC"/>
    <property type="match status" value="1"/>
</dbReference>
<dbReference type="SUPFAM" id="SSF110857">
    <property type="entry name" value="Gamma-glutamyl cyclotransferase-like"/>
    <property type="match status" value="1"/>
</dbReference>
<evidence type="ECO:0000250" key="1">
    <source>
        <dbReference type="UniProtKB" id="O75223"/>
    </source>
</evidence>
<evidence type="ECO:0000250" key="2">
    <source>
        <dbReference type="UniProtKB" id="Q8WUX2"/>
    </source>
</evidence>
<evidence type="ECO:0000250" key="3">
    <source>
        <dbReference type="UniProtKB" id="Q9BUX1"/>
    </source>
</evidence>
<evidence type="ECO:0000269" key="4">
    <source>
    </source>
</evidence>
<evidence type="ECO:0000303" key="5">
    <source>
    </source>
</evidence>
<evidence type="ECO:0000305" key="6"/>